<protein>
    <recommendedName>
        <fullName>Elastase</fullName>
        <ecNumber>3.4.24.26</ecNumber>
    </recommendedName>
    <alternativeName>
        <fullName>Neutral metalloproteinase</fullName>
    </alternativeName>
    <alternativeName>
        <fullName evidence="12">PAE</fullName>
    </alternativeName>
    <alternativeName>
        <fullName>Pseudolysin</fullName>
    </alternativeName>
    <component>
        <recommendedName>
            <fullName>Pro-elastase</fullName>
        </recommendedName>
    </component>
</protein>
<gene>
    <name type="primary">lasB</name>
    <name type="ordered locus">PA3724</name>
</gene>
<proteinExistence type="evidence at protein level"/>
<sequence length="498" mass="53687">MKKVSTLDLLFVAIMGVSPAAFAADLIDVSKLPSKAAQGAPGPVTLQAAVGAGGADELKAIRSTTLPNGKQVTRYEQFHNGVRVVGEAITEVKGPGKSVAAQRSGHFVANIAADLPGSTTAAVSAEQVLAQAKSLKAQGRKTENDKVELVIRLGENNIAQLVYNVSYLIPGEGLSRPHFVIDAKTGEVLDQWEGLAHAEAGGPGGNQKIGKYTYGSDYGPLIVNDRCEMDDGNVITVDMNSSTDDSKTTPFRFACPTNTYKQVNGAYSPLNDAHFFGGVVFKLYRDWFGTSPLTHKLYMKVHYGRSVENAYWDGTAMLFGDGATMFYPLVSLDVAAHEVSHGFTEQNSGLIYRGQSGGMNEAFSDMAGEAAEFYMRGKNDFLIGYDIKKGSGALRYMDQPSRDGRSIDNASQYYNGIDVHHSSGVYNRAFYLLANSPGWDTRKAFEVFVDANRYYWTATSNYNSGACGVIRSAQNRNYSAADVTRAFSTVGVTCPSAL</sequence>
<accession>P14756</accession>
<reference key="1">
    <citation type="journal article" date="1988" name="J. Bacteriol.">
        <title>Molecular characterization and nucleotide sequence of the Pseudomonas aeruginosa elastase structural gene.</title>
        <authorList>
            <person name="Bever R.A."/>
            <person name="Iglewski B.H."/>
        </authorList>
    </citation>
    <scope>NUCLEOTIDE SEQUENCE [GENOMIC DNA]</scope>
    <source>
        <strain>PAO</strain>
    </source>
</reference>
<reference key="2">
    <citation type="journal article" date="1989" name="J. Bacteriol.">
        <title>Structural gene and complete amino acid sequence of Pseudomonas aeruginosa IFO 3455 elastase.</title>
        <authorList>
            <person name="Fukushima J."/>
            <person name="Yamamoto S."/>
            <person name="Morihara K."/>
            <person name="Atsumi Y."/>
            <person name="Takeuchi H."/>
            <person name="Kawamoto S."/>
            <person name="Okuda K."/>
        </authorList>
    </citation>
    <scope>NUCLEOTIDE SEQUENCE [GENOMIC DNA]</scope>
    <source>
        <strain>NBRC 13130 / JCM 20134</strain>
    </source>
</reference>
<reference key="3">
    <citation type="journal article" date="1991" name="J. Bacteriol.">
        <title>Detection of elastase production in Escherichia coli with the elastase structural gene from several non-elastase-producing strains of Pseudomonas aeruginosa.</title>
        <authorList>
            <person name="Tanaka E."/>
            <person name="Kawamoto S."/>
            <person name="Fukushima J."/>
            <person name="Hamajima K."/>
            <person name="Onishi H."/>
            <person name="Miyagi Y."/>
            <person name="Inami S."/>
            <person name="Morihara K."/>
            <person name="Okuda K."/>
        </authorList>
    </citation>
    <scope>NUCLEOTIDE SEQUENCE [GENOMIC DNA]</scope>
    <source>
        <strain>ATCC 29260 / PA103</strain>
        <strain>N-10</strain>
    </source>
</reference>
<reference key="4">
    <citation type="journal article" date="2000" name="Biochem. Eng. J.">
        <title>Cloning and sequencing of a gene of organic solvent-stable protease secreted from Pseudomonas aeruginosa PST-01 and its expression in Escherichia coli.</title>
        <authorList>
            <person name="Ogino H."/>
            <person name="Yokoo J."/>
            <person name="Watanabe F."/>
            <person name="Ishikawa H."/>
        </authorList>
    </citation>
    <scope>NUCLEOTIDE SEQUENCE [GENOMIC DNA]</scope>
    <source>
        <strain>PST-01</strain>
    </source>
</reference>
<reference key="5">
    <citation type="journal article" date="2000" name="Nature">
        <title>Complete genome sequence of Pseudomonas aeruginosa PAO1, an opportunistic pathogen.</title>
        <authorList>
            <person name="Stover C.K."/>
            <person name="Pham X.-Q.T."/>
            <person name="Erwin A.L."/>
            <person name="Mizoguchi S.D."/>
            <person name="Warrener P."/>
            <person name="Hickey M.J."/>
            <person name="Brinkman F.S.L."/>
            <person name="Hufnagle W.O."/>
            <person name="Kowalik D.J."/>
            <person name="Lagrou M."/>
            <person name="Garber R.L."/>
            <person name="Goltry L."/>
            <person name="Tolentino E."/>
            <person name="Westbrock-Wadman S."/>
            <person name="Yuan Y."/>
            <person name="Brody L.L."/>
            <person name="Coulter S.N."/>
            <person name="Folger K.R."/>
            <person name="Kas A."/>
            <person name="Larbig K."/>
            <person name="Lim R.M."/>
            <person name="Smith K.A."/>
            <person name="Spencer D.H."/>
            <person name="Wong G.K.-S."/>
            <person name="Wu Z."/>
            <person name="Paulsen I.T."/>
            <person name="Reizer J."/>
            <person name="Saier M.H. Jr."/>
            <person name="Hancock R.E.W."/>
            <person name="Lory S."/>
            <person name="Olson M.V."/>
        </authorList>
    </citation>
    <scope>NUCLEOTIDE SEQUENCE [LARGE SCALE GENOMIC DNA]</scope>
    <source>
        <strain>ATCC 15692 / DSM 22644 / CIP 104116 / JCM 14847 / LMG 12228 / 1C / PRS 101 / PAO1</strain>
    </source>
</reference>
<reference key="6">
    <citation type="journal article" date="1992" name="FEBS Lett.">
        <title>Identification of cleavage sites involved in proteolytic processing of Pseudomonas aeruginosa preproelastase.</title>
        <authorList>
            <person name="Kessler E."/>
            <person name="Safrin M."/>
            <person name="Peretz M."/>
            <person name="Burstein Y."/>
        </authorList>
    </citation>
    <scope>PROTEIN SEQUENCE OF 24-28 AND 198-212</scope>
</reference>
<reference key="7">
    <citation type="journal article" date="1998" name="J. Bacteriol.">
        <title>Secretion of elastinolytic enzymes and their propeptides by Pseudomonas aeruginosa.</title>
        <authorList>
            <person name="Braun P."/>
            <person name="de Groot A."/>
            <person name="Bitter W."/>
            <person name="Tommassen J."/>
        </authorList>
    </citation>
    <scope>PROTEIN SEQUENCE OF 24-28</scope>
    <scope>FUNCTION</scope>
    <scope>SUBCELLULAR LOCATION</scope>
    <scope>PROTEOLYTIC CLEAVAGE</scope>
    <scope>DISRUPTION PHENOTYPE</scope>
    <source>
        <strain>PAO1 / PAO25</strain>
    </source>
</reference>
<reference key="8">
    <citation type="journal article" date="1987" name="J. Bacteriol.">
        <title>Cloning and characterization of elastase genes from Pseudomonas aeruginosa.</title>
        <authorList>
            <person name="Schad P.A."/>
            <person name="Bever R.A."/>
            <person name="Nicas T.I."/>
            <person name="Leduc F."/>
            <person name="Hanne L.F."/>
            <person name="Iglewski B.H."/>
        </authorList>
    </citation>
    <scope>PROTEIN SEQUENCE OF 198-237</scope>
    <source>
        <strain>PAO</strain>
    </source>
</reference>
<reference key="9">
    <citation type="journal article" date="1990" name="Infect. Immun.">
        <title>Comparison of the Vibrio cholerae hemagglutinin/protease and the Pseudomonas aeruginosa elastase.</title>
        <authorList>
            <person name="Haese C.C."/>
            <person name="Finkelstein R.A."/>
        </authorList>
    </citation>
    <scope>PROTEIN SEQUENCE OF 198-217</scope>
    <source>
        <strain>569B</strain>
    </source>
</reference>
<reference key="10">
    <citation type="journal article" date="1991" name="J. Bacteriol.">
        <title>Substitution of active-site His-223 in Pseudomonas aeruginosa elastase and expression of the mutated lasB alleles in Escherichia coli show evidence for autoproteolytic processing of proelastase.</title>
        <authorList>
            <person name="McIver K."/>
            <person name="Kessler E."/>
            <person name="Ohman D.E."/>
        </authorList>
    </citation>
    <scope>PROTEIN SEQUENCE OF 198-212</scope>
    <scope>FUNCTION</scope>
    <scope>EXPRESSION IN E.COLI</scope>
    <scope>MUTAGENESIS OF HIS-420</scope>
    <source>
        <strain>FRD1</strain>
    </source>
</reference>
<reference key="11">
    <citation type="thesis" date="2005" institute="Ben-Gurion University" country="Israel">
        <title>Biofouling in water treatment systems: effect of membrane properties on biofilm formation.</title>
        <authorList>
            <person name="Liddor M."/>
        </authorList>
    </citation>
    <scope>PROTEIN SEQUENCE OF 212-226; 354-376 AND 429-442</scope>
    <source>
        <strain>ATCC 33467 / type 1 smooth</strain>
        <strain>ATCC 33468 / type 2 mucoid</strain>
    </source>
</reference>
<reference key="12">
    <citation type="journal article" date="1988" name="J. Bacteriol.">
        <title>Synthesis, processing, and transport of Pseudomonas aeruginosa elastase.</title>
        <authorList>
            <person name="Kessler E."/>
            <person name="Safrin M."/>
        </authorList>
    </citation>
    <scope>SUBCELLULAR LOCATION</scope>
    <scope>INDUCTION</scope>
    <scope>PROTEOLYTIC CLEAVAGE</scope>
    <source>
        <strain>Habs serotype I</strain>
    </source>
</reference>
<reference key="13">
    <citation type="journal article" date="1992" name="J. Bacteriol.">
        <title>Efficient production and processing of elastase and LasA by Pseudomonas aeruginosa require zinc and calcium ions.</title>
        <authorList>
            <person name="Olson J.C."/>
            <person name="Ohman D.E."/>
        </authorList>
    </citation>
    <scope>FUNCTION</scope>
    <scope>SUBCELLULAR LOCATION</scope>
    <scope>INDUCTION</scope>
    <source>
        <strain>ATCC 15692 / DSM 22644 / CIP 104116 / JCM 14847 / LMG 12228 / 1C / PRS 101 / PAO1</strain>
        <strain>DG1</strain>
        <strain>FRD1 / FRD2</strain>
    </source>
</reference>
<reference key="14">
    <citation type="journal article" date="2001" name="J. Biol. Chem.">
        <title>A secreted aminopeptidase of Pseudomonas aeruginosa. Identification, primary structure, and relationship to other aminopeptidases.</title>
        <authorList>
            <person name="Cahan R."/>
            <person name="Axelrad I."/>
            <person name="Safrin M."/>
            <person name="Ohman D.E."/>
            <person name="Kessler E."/>
        </authorList>
    </citation>
    <scope>FUNCTION</scope>
    <scope>ACTIVITY REGULATION</scope>
    <scope>DISRUPTION PHENOTYPE</scope>
    <source>
        <strain>ATCC 15692 / DSM 22644 / CIP 104116 / JCM 14847 / LMG 12228 / 1C / PRS 101 / PAO1</strain>
        <strain>FRD1</strain>
        <strain>Habs serotype 1</strain>
    </source>
</reference>
<reference key="15">
    <citation type="journal article" date="1991" name="J. Biol. Chem.">
        <title>Three-dimensional structure of the elastase of Pseudomonas aeruginosa at 1.5-A resolution.</title>
        <authorList>
            <person name="Thayer M.M."/>
            <person name="Flaherty K.M."/>
            <person name="McKay D.B."/>
        </authorList>
    </citation>
    <scope>X-RAY CRYSTALLOGRAPHY (1.5 ANGSTROMS) OF 198-498 IN COMPLEX WITH CALCIUM AND ZINC</scope>
    <scope>COFACTOR</scope>
    <scope>SUBUNIT</scope>
    <scope>DISULFIDE BOND</scope>
    <scope>ACTIVE SITE</scope>
</reference>
<reference key="16">
    <citation type="submission" date="2004-07" db="PDB data bank">
        <title>Elastase of Pseudomonas aeruginosa with an inhibitor.</title>
        <authorList>
            <person name="Bitto E."/>
            <person name="McKay D.B."/>
        </authorList>
    </citation>
    <scope>X-RAY CRYSTALLOGRAPHY (1.40 ANGSTROMS) OF 198-498 IN COMPLEX WITH CALCIUM AND ZINC AND AN INHIBITOR</scope>
    <scope>COFACTOR</scope>
    <scope>DISULFIDE BOND</scope>
</reference>
<reference key="17">
    <citation type="submission" date="2008-06" db="PDB data bank">
        <title>Structure of the elastase of Pseudomonas aeruginosa complexed with phosphoramidon.</title>
        <authorList>
            <person name="Overgaard M.T."/>
            <person name="McKay D.B."/>
        </authorList>
    </citation>
    <scope>X-RAY CRYSTALLOGRAPHY (1.40 ANGSTROMS) OF 198-498 IN COMPLEX WITH CALCIUM AND ZINC AND AN INHIBITOR</scope>
    <scope>COFACTOR</scope>
    <scope>DISULFIDE BOND</scope>
</reference>
<name>ELAS_PSEAE</name>
<keyword id="KW-0002">3D-structure</keyword>
<keyword id="KW-0068">Autocatalytic cleavage</keyword>
<keyword id="KW-0106">Calcium</keyword>
<keyword id="KW-0903">Direct protein sequencing</keyword>
<keyword id="KW-1015">Disulfide bond</keyword>
<keyword id="KW-0378">Hydrolase</keyword>
<keyword id="KW-0479">Metal-binding</keyword>
<keyword id="KW-0482">Metalloprotease</keyword>
<keyword id="KW-0645">Protease</keyword>
<keyword id="KW-1185">Reference proteome</keyword>
<keyword id="KW-0964">Secreted</keyword>
<keyword id="KW-0732">Signal</keyword>
<keyword id="KW-0843">Virulence</keyword>
<keyword id="KW-0862">Zinc</keyword>
<keyword id="KW-0865">Zymogen</keyword>
<comment type="function">
    <text evidence="1 3 4 9">Cleaves host elastin, collagen, IgG, and several complement components as well as endogenous pro-aminopeptidase (PubMed:11533066). Autocatalyses processing of its pro-peptide (PubMed:1744034, PubMed:9642203). Processes the pro-peptide of pro-chitin-binding protein (cbpD) (PubMed:9642203). Involved in the pathogenesis of P.aeruginosa infections.</text>
</comment>
<comment type="catalytic activity">
    <reaction>
        <text>Hydrolysis of proteins including elastin, collagen types III and IV, fibronectin and immunoglobulin A, generally with bulky hydrophobic group at P1'. Insulin B chain cleavage pattern identical to that of thermolysin, but specificity differs in other respects.</text>
        <dbReference type="EC" id="3.4.24.26"/>
    </reaction>
</comment>
<comment type="cofactor">
    <cofactor evidence="5 10 11">
        <name>Ca(2+)</name>
        <dbReference type="ChEBI" id="CHEBI:29108"/>
    </cofactor>
    <text evidence="5 10 11">Binds 1 Ca(2+) ion per subunit.</text>
</comment>
<comment type="cofactor">
    <cofactor evidence="5 10 11">
        <name>Zn(2+)</name>
        <dbReference type="ChEBI" id="CHEBI:29105"/>
    </cofactor>
    <text evidence="5 10 11">Binds 1 Zn(2+) ion per subunit.</text>
</comment>
<comment type="activity regulation">
    <text evidence="1">Inhibited by phosphoramidon.</text>
</comment>
<comment type="subunit">
    <text evidence="5">Monomer.</text>
</comment>
<comment type="subcellular location">
    <subcellularLocation>
        <location evidence="3 8 9">Secreted</location>
    </subcellularLocation>
    <text evidence="9">Secreted in an Xcp-dependent fashion (a type II secretion pathway).</text>
</comment>
<comment type="induction">
    <text evidence="3 8">Optimal protein expression in vivo requires both Zn(2+) and Ca(2+) during growth (at protein level).</text>
</comment>
<comment type="PTM">
    <text evidence="1 4 8 9">Made as a membrane-associated pre-pro-protein, which is exported to the periplasm (yielding pro-elastase) with removal of the signal peptide. Under certain conditions pro-elastase can accumulate. The pro-peptide is removed in the periplasm yielding a (mature length) 33 kDa protein, probably by autocatalysis (PubMed:1744034). The pro-peptide probably remains associated with elastase and can be secreted (PubMed:9642203). Further alterations (perhaps processing) seems to be required before secretion into the extracellular space (PubMed:1744034).</text>
</comment>
<comment type="disruption phenotype">
    <text evidence="1 9">Loss of processing of its own pro-peptide and pro-chitin-binding protein CbpD (PubMed:9642203). Loss of processing of pro-aminopeptidase to mature aminopeptidase (PubMed:11533066).</text>
</comment>
<comment type="similarity">
    <text evidence="13">Belongs to the peptidase M4 family.</text>
</comment>
<evidence type="ECO:0000269" key="1">
    <source>
    </source>
</evidence>
<evidence type="ECO:0000269" key="2">
    <source>
    </source>
</evidence>
<evidence type="ECO:0000269" key="3">
    <source>
    </source>
</evidence>
<evidence type="ECO:0000269" key="4">
    <source>
    </source>
</evidence>
<evidence type="ECO:0000269" key="5">
    <source>
    </source>
</evidence>
<evidence type="ECO:0000269" key="6">
    <source>
    </source>
</evidence>
<evidence type="ECO:0000269" key="7">
    <source>
    </source>
</evidence>
<evidence type="ECO:0000269" key="8">
    <source>
    </source>
</evidence>
<evidence type="ECO:0000269" key="9">
    <source>
    </source>
</evidence>
<evidence type="ECO:0000269" key="10">
    <source ref="16"/>
</evidence>
<evidence type="ECO:0000269" key="11">
    <source ref="17"/>
</evidence>
<evidence type="ECO:0000303" key="12">
    <source>
    </source>
</evidence>
<evidence type="ECO:0000305" key="13"/>
<evidence type="ECO:0000305" key="14">
    <source>
    </source>
</evidence>
<evidence type="ECO:0007829" key="15">
    <source>
        <dbReference type="PDB" id="1EZM"/>
    </source>
</evidence>
<evidence type="ECO:0007829" key="16">
    <source>
        <dbReference type="PDB" id="1U4G"/>
    </source>
</evidence>
<evidence type="ECO:0007829" key="17">
    <source>
        <dbReference type="PDB" id="6F8B"/>
    </source>
</evidence>
<evidence type="ECO:0007829" key="18">
    <source>
        <dbReference type="PDB" id="7QH1"/>
    </source>
</evidence>
<evidence type="ECO:0007829" key="19">
    <source>
        <dbReference type="PDB" id="8CR3"/>
    </source>
</evidence>
<feature type="signal peptide" evidence="2">
    <location>
        <begin position="1"/>
        <end position="23"/>
    </location>
</feature>
<feature type="chain" id="PRO_0000431322" description="Pro-elastase">
    <location>
        <begin position="24"/>
        <end position="498"/>
    </location>
</feature>
<feature type="propeptide" id="PRO_0000028616" evidence="2 6 7 9">
    <location>
        <begin position="24"/>
        <end position="197"/>
    </location>
</feature>
<feature type="chain" id="PRO_0000028617" description="Elastase" evidence="2 4 6 7">
    <location>
        <begin position="198"/>
        <end position="498"/>
    </location>
</feature>
<feature type="active site" evidence="14">
    <location>
        <position position="338"/>
    </location>
</feature>
<feature type="active site" description="Proton donor" evidence="14">
    <location>
        <position position="420"/>
    </location>
</feature>
<feature type="binding site" evidence="5 10 11">
    <location>
        <position position="333"/>
    </location>
    <ligand>
        <name>Ca(2+)</name>
        <dbReference type="ChEBI" id="CHEBI:29108"/>
    </ligand>
</feature>
<feature type="binding site" evidence="5 10 11">
    <location>
        <position position="337"/>
    </location>
    <ligand>
        <name>Zn(2+)</name>
        <dbReference type="ChEBI" id="CHEBI:29105"/>
        <note>catalytic</note>
    </ligand>
</feature>
<feature type="binding site" evidence="5 10 11">
    <location>
        <position position="341"/>
    </location>
    <ligand>
        <name>Zn(2+)</name>
        <dbReference type="ChEBI" id="CHEBI:29105"/>
        <note>catalytic</note>
    </ligand>
</feature>
<feature type="binding site" evidence="5 10 11">
    <location>
        <position position="361"/>
    </location>
    <ligand>
        <name>Zn(2+)</name>
        <dbReference type="ChEBI" id="CHEBI:29105"/>
        <note>catalytic</note>
    </ligand>
</feature>
<feature type="binding site" evidence="5 10 11">
    <location>
        <position position="369"/>
    </location>
    <ligand>
        <name>Ca(2+)</name>
        <dbReference type="ChEBI" id="CHEBI:29108"/>
    </ligand>
</feature>
<feature type="binding site" evidence="5 10 11">
    <location>
        <position position="372"/>
    </location>
    <ligand>
        <name>Ca(2+)</name>
        <dbReference type="ChEBI" id="CHEBI:29108"/>
    </ligand>
</feature>
<feature type="binding site" evidence="5 10 11">
    <location>
        <position position="380"/>
    </location>
    <ligand>
        <name>Ca(2+)</name>
        <dbReference type="ChEBI" id="CHEBI:29108"/>
    </ligand>
</feature>
<feature type="binding site" evidence="5 10 11">
    <location>
        <position position="382"/>
    </location>
    <ligand>
        <name>Ca(2+)</name>
        <dbReference type="ChEBI" id="CHEBI:29108"/>
    </ligand>
</feature>
<feature type="site" description="Cleavage; by autolysis" evidence="4">
    <location>
        <begin position="197"/>
        <end position="198"/>
    </location>
</feature>
<feature type="disulfide bond" evidence="5 10 11">
    <location>
        <begin position="227"/>
        <end position="255"/>
    </location>
</feature>
<feature type="disulfide bond" evidence="5 11">
    <location>
        <begin position="467"/>
        <end position="494"/>
    </location>
</feature>
<feature type="sequence variant" description="In strain: PA103 and N-10.">
    <original>Y</original>
    <variation>T</variation>
    <location>
        <position position="75"/>
    </location>
</feature>
<feature type="sequence variant" description="In strain: PA103 and N-10.">
    <original>Q</original>
    <variation>R</variation>
    <location>
        <position position="102"/>
    </location>
</feature>
<feature type="sequence variant" description="In strain: PA103 and N-10.">
    <original>T</original>
    <variation>Y</variation>
    <location>
        <position position="185"/>
    </location>
</feature>
<feature type="sequence variant" description="In strain: 569B.">
    <original>K</original>
    <variation>I</variation>
    <location>
        <position position="211"/>
    </location>
</feature>
<feature type="sequence variant" description="In strain: PA103 and N-10.">
    <original>S</original>
    <variation>G</variation>
    <location>
        <position position="241"/>
    </location>
</feature>
<feature type="sequence variant" description="In strain: PA103 and N-10.">
    <original>K</original>
    <variation>D</variation>
    <location>
        <position position="282"/>
    </location>
</feature>
<feature type="sequence variant" description="In strain: IFO 3455.">
    <original>M</original>
    <variation>V</variation>
    <location>
        <position position="325"/>
    </location>
</feature>
<feature type="sequence variant" description="In strain: PA103.">
    <original>R</original>
    <variation>S</variation>
    <location>
        <position position="471"/>
    </location>
</feature>
<feature type="mutagenesis site" description="Loss of proteolytic and elastolytic activity; significantly decreased processing of proelastase, proelastase accumulates in the periplasm (in E.coli)." evidence="4">
    <original>H</original>
    <variation>D</variation>
    <variation>Y</variation>
    <location>
        <position position="420"/>
    </location>
</feature>
<feature type="strand" evidence="19">
    <location>
        <begin position="199"/>
        <end position="206"/>
    </location>
</feature>
<feature type="turn" evidence="19">
    <location>
        <begin position="207"/>
        <end position="209"/>
    </location>
</feature>
<feature type="strand" evidence="19">
    <location>
        <begin position="210"/>
        <end position="214"/>
    </location>
</feature>
<feature type="turn" evidence="15">
    <location>
        <begin position="215"/>
        <end position="217"/>
    </location>
</feature>
<feature type="strand" evidence="19">
    <location>
        <begin position="227"/>
        <end position="230"/>
    </location>
</feature>
<feature type="strand" evidence="19">
    <location>
        <begin position="232"/>
        <end position="238"/>
    </location>
</feature>
<feature type="strand" evidence="18">
    <location>
        <begin position="255"/>
        <end position="257"/>
    </location>
</feature>
<feature type="helix" evidence="19">
    <location>
        <begin position="269"/>
        <end position="288"/>
    </location>
</feature>
<feature type="strand" evidence="16">
    <location>
        <begin position="292"/>
        <end position="295"/>
    </location>
</feature>
<feature type="strand" evidence="19">
    <location>
        <begin position="297"/>
        <end position="306"/>
    </location>
</feature>
<feature type="strand" evidence="19">
    <location>
        <begin position="310"/>
        <end position="312"/>
    </location>
</feature>
<feature type="strand" evidence="19">
    <location>
        <begin position="314"/>
        <end position="320"/>
    </location>
</feature>
<feature type="strand" evidence="19">
    <location>
        <begin position="324"/>
        <end position="327"/>
    </location>
</feature>
<feature type="helix" evidence="19">
    <location>
        <begin position="332"/>
        <end position="346"/>
    </location>
</feature>
<feature type="helix" evidence="19">
    <location>
        <begin position="354"/>
        <end position="376"/>
    </location>
</feature>
<feature type="strand" evidence="19">
    <location>
        <begin position="381"/>
        <end position="384"/>
    </location>
</feature>
<feature type="turn" evidence="19">
    <location>
        <begin position="385"/>
        <end position="387"/>
    </location>
</feature>
<feature type="strand" evidence="19">
    <location>
        <begin position="388"/>
        <end position="391"/>
    </location>
</feature>
<feature type="strand" evidence="19">
    <location>
        <begin position="394"/>
        <end position="399"/>
    </location>
</feature>
<feature type="helix" evidence="19">
    <location>
        <begin position="400"/>
        <end position="403"/>
    </location>
</feature>
<feature type="strand" evidence="17">
    <location>
        <begin position="404"/>
        <end position="406"/>
    </location>
</feature>
<feature type="helix" evidence="19">
    <location>
        <begin position="410"/>
        <end position="412"/>
    </location>
</feature>
<feature type="helix" evidence="19">
    <location>
        <begin position="419"/>
        <end position="422"/>
    </location>
</feature>
<feature type="helix" evidence="19">
    <location>
        <begin position="424"/>
        <end position="434"/>
    </location>
</feature>
<feature type="helix" evidence="19">
    <location>
        <begin position="441"/>
        <end position="454"/>
    </location>
</feature>
<feature type="helix" evidence="19">
    <location>
        <begin position="462"/>
        <end position="475"/>
    </location>
</feature>
<feature type="helix" evidence="19">
    <location>
        <begin position="480"/>
        <end position="489"/>
    </location>
</feature>
<dbReference type="EC" id="3.4.24.26"/>
<dbReference type="EMBL" id="M19472">
    <property type="protein sequence ID" value="AAB36615.1"/>
    <property type="molecule type" value="Genomic_DNA"/>
</dbReference>
<dbReference type="EMBL" id="M24531">
    <property type="protein sequence ID" value="AAA25811.1"/>
    <property type="molecule type" value="Genomic_DNA"/>
</dbReference>
<dbReference type="EMBL" id="AB029328">
    <property type="protein sequence ID" value="BAB79621.1"/>
    <property type="molecule type" value="Genomic_DNA"/>
</dbReference>
<dbReference type="EMBL" id="AE004091">
    <property type="protein sequence ID" value="AAG07111.1"/>
    <property type="molecule type" value="Genomic_DNA"/>
</dbReference>
<dbReference type="PIR" id="A32359">
    <property type="entry name" value="HYBSPA"/>
</dbReference>
<dbReference type="RefSeq" id="NP_252413.1">
    <property type="nucleotide sequence ID" value="NC_002516.2"/>
</dbReference>
<dbReference type="RefSeq" id="WP_003113835.1">
    <property type="nucleotide sequence ID" value="NZ_QZGE01000001.1"/>
</dbReference>
<dbReference type="PDB" id="1EZM">
    <property type="method" value="X-ray"/>
    <property type="resolution" value="1.50 A"/>
    <property type="chains" value="A=198-498"/>
</dbReference>
<dbReference type="PDB" id="1U4G">
    <property type="method" value="X-ray"/>
    <property type="resolution" value="1.40 A"/>
    <property type="chains" value="A=198-498"/>
</dbReference>
<dbReference type="PDB" id="3DBK">
    <property type="method" value="X-ray"/>
    <property type="resolution" value="1.40 A"/>
    <property type="chains" value="A=198-498"/>
</dbReference>
<dbReference type="PDB" id="6F8B">
    <property type="method" value="X-ray"/>
    <property type="resolution" value="1.30 A"/>
    <property type="chains" value="A=198-498"/>
</dbReference>
<dbReference type="PDB" id="6FZX">
    <property type="method" value="X-ray"/>
    <property type="resolution" value="2.10 A"/>
    <property type="chains" value="A=198-498"/>
</dbReference>
<dbReference type="PDB" id="7OC7">
    <property type="method" value="X-ray"/>
    <property type="resolution" value="1.95 A"/>
    <property type="chains" value="A=198-498"/>
</dbReference>
<dbReference type="PDB" id="7QH1">
    <property type="method" value="X-ray"/>
    <property type="resolution" value="2.74 A"/>
    <property type="chains" value="A/B/C/D=198-498"/>
</dbReference>
<dbReference type="PDB" id="7Z68">
    <property type="method" value="X-ray"/>
    <property type="resolution" value="1.50 A"/>
    <property type="chains" value="A=198-498"/>
</dbReference>
<dbReference type="PDB" id="8CC4">
    <property type="method" value="X-ray"/>
    <property type="resolution" value="2.70 A"/>
    <property type="chains" value="A/B=198-498"/>
</dbReference>
<dbReference type="PDB" id="8CR3">
    <property type="method" value="X-ray"/>
    <property type="resolution" value="1.12 A"/>
    <property type="chains" value="A=24-498"/>
</dbReference>
<dbReference type="PDB" id="8CR7">
    <property type="method" value="X-ray"/>
    <property type="resolution" value="1.50 A"/>
    <property type="chains" value="A/B=24-498"/>
</dbReference>
<dbReference type="PDB" id="8R1B">
    <property type="method" value="X-ray"/>
    <property type="resolution" value="1.31 A"/>
    <property type="chains" value="A=24-498"/>
</dbReference>
<dbReference type="PDBsum" id="1EZM"/>
<dbReference type="PDBsum" id="1U4G"/>
<dbReference type="PDBsum" id="3DBK"/>
<dbReference type="PDBsum" id="6F8B"/>
<dbReference type="PDBsum" id="6FZX"/>
<dbReference type="PDBsum" id="7OC7"/>
<dbReference type="PDBsum" id="7QH1"/>
<dbReference type="PDBsum" id="7Z68"/>
<dbReference type="PDBsum" id="8CC4"/>
<dbReference type="PDBsum" id="8CR3"/>
<dbReference type="PDBsum" id="8CR7"/>
<dbReference type="PDBsum" id="8R1B"/>
<dbReference type="SMR" id="P14756"/>
<dbReference type="STRING" id="208964.PA3724"/>
<dbReference type="BindingDB" id="P14756"/>
<dbReference type="ChEMBL" id="CHEMBL1075146"/>
<dbReference type="DrugBank" id="DB02307">
    <property type="generic name" value="N-(1-carboxy-3-phenylpropyl)phenylalanyl-alpha-asparagine"/>
</dbReference>
<dbReference type="MEROPS" id="M04.005"/>
<dbReference type="PaxDb" id="208964-PA3724"/>
<dbReference type="GeneID" id="880368"/>
<dbReference type="KEGG" id="pae:PA3724"/>
<dbReference type="PATRIC" id="fig|208964.12.peg.3895"/>
<dbReference type="PseudoCAP" id="PA3724"/>
<dbReference type="HOGENOM" id="CLU_008590_4_2_6"/>
<dbReference type="InParanoid" id="P14756"/>
<dbReference type="OrthoDB" id="5378341at2"/>
<dbReference type="PhylomeDB" id="P14756"/>
<dbReference type="BioCyc" id="MetaCyc:MONOMER-14569"/>
<dbReference type="BioCyc" id="PAER208964:G1FZ6-3794-MONOMER"/>
<dbReference type="BRENDA" id="3.4.24.26">
    <property type="organism ID" value="5087"/>
</dbReference>
<dbReference type="EvolutionaryTrace" id="P14756"/>
<dbReference type="PHI-base" id="PHI:11653"/>
<dbReference type="PHI-base" id="PHI:7892"/>
<dbReference type="PHI-base" id="PHI:9431"/>
<dbReference type="PRO" id="PR:P14756"/>
<dbReference type="Proteomes" id="UP000002438">
    <property type="component" value="Chromosome"/>
</dbReference>
<dbReference type="GO" id="GO:0005576">
    <property type="term" value="C:extracellular region"/>
    <property type="evidence" value="ECO:0007669"/>
    <property type="project" value="UniProtKB-SubCell"/>
</dbReference>
<dbReference type="GO" id="GO:0004175">
    <property type="term" value="F:endopeptidase activity"/>
    <property type="evidence" value="ECO:0000314"/>
    <property type="project" value="CACAO"/>
</dbReference>
<dbReference type="GO" id="GO:0046872">
    <property type="term" value="F:metal ion binding"/>
    <property type="evidence" value="ECO:0007669"/>
    <property type="project" value="UniProtKB-KW"/>
</dbReference>
<dbReference type="GO" id="GO:0004222">
    <property type="term" value="F:metalloendopeptidase activity"/>
    <property type="evidence" value="ECO:0007669"/>
    <property type="project" value="InterPro"/>
</dbReference>
<dbReference type="GO" id="GO:0071978">
    <property type="term" value="P:bacterial-type flagellum-dependent swarming motility"/>
    <property type="evidence" value="ECO:0000315"/>
    <property type="project" value="PseudoCAP"/>
</dbReference>
<dbReference type="GO" id="GO:0015628">
    <property type="term" value="P:protein secretion by the type II secretion system"/>
    <property type="evidence" value="ECO:0000314"/>
    <property type="project" value="PseudoCAP"/>
</dbReference>
<dbReference type="GO" id="GO:0043952">
    <property type="term" value="P:protein transport by the Sec complex"/>
    <property type="evidence" value="ECO:0000314"/>
    <property type="project" value="PseudoCAP"/>
</dbReference>
<dbReference type="GO" id="GO:0006508">
    <property type="term" value="P:proteolysis"/>
    <property type="evidence" value="ECO:0000314"/>
    <property type="project" value="PseudoCAP"/>
</dbReference>
<dbReference type="GO" id="GO:0044010">
    <property type="term" value="P:single-species biofilm formation"/>
    <property type="evidence" value="ECO:0000315"/>
    <property type="project" value="PseudoCAP"/>
</dbReference>
<dbReference type="CDD" id="cd09597">
    <property type="entry name" value="M4_TLP"/>
    <property type="match status" value="1"/>
</dbReference>
<dbReference type="FunFam" id="3.10.170.10:FF:000002">
    <property type="entry name" value="Elastase"/>
    <property type="match status" value="1"/>
</dbReference>
<dbReference type="Gene3D" id="3.10.170.10">
    <property type="match status" value="1"/>
</dbReference>
<dbReference type="Gene3D" id="3.10.450.40">
    <property type="match status" value="1"/>
</dbReference>
<dbReference type="Gene3D" id="3.10.450.490">
    <property type="match status" value="1"/>
</dbReference>
<dbReference type="Gene3D" id="1.10.390.10">
    <property type="entry name" value="Neutral Protease Domain 2"/>
    <property type="match status" value="1"/>
</dbReference>
<dbReference type="InterPro" id="IPR011096">
    <property type="entry name" value="FTP_domain"/>
</dbReference>
<dbReference type="InterPro" id="IPR025711">
    <property type="entry name" value="PepSY"/>
</dbReference>
<dbReference type="InterPro" id="IPR023612">
    <property type="entry name" value="Peptidase_M4"/>
</dbReference>
<dbReference type="InterPro" id="IPR027268">
    <property type="entry name" value="Peptidase_M4/M1_CTD_sf"/>
</dbReference>
<dbReference type="InterPro" id="IPR001570">
    <property type="entry name" value="Peptidase_M4_C_domain"/>
</dbReference>
<dbReference type="InterPro" id="IPR013856">
    <property type="entry name" value="Peptidase_M4_domain"/>
</dbReference>
<dbReference type="InterPro" id="IPR050728">
    <property type="entry name" value="Zinc_Metalloprotease_M4"/>
</dbReference>
<dbReference type="PANTHER" id="PTHR33794">
    <property type="entry name" value="BACILLOLYSIN"/>
    <property type="match status" value="1"/>
</dbReference>
<dbReference type="PANTHER" id="PTHR33794:SF1">
    <property type="entry name" value="BACILLOLYSIN"/>
    <property type="match status" value="1"/>
</dbReference>
<dbReference type="Pfam" id="PF07504">
    <property type="entry name" value="FTP"/>
    <property type="match status" value="1"/>
</dbReference>
<dbReference type="Pfam" id="PF03413">
    <property type="entry name" value="PepSY"/>
    <property type="match status" value="1"/>
</dbReference>
<dbReference type="Pfam" id="PF01447">
    <property type="entry name" value="Peptidase_M4"/>
    <property type="match status" value="1"/>
</dbReference>
<dbReference type="Pfam" id="PF02868">
    <property type="entry name" value="Peptidase_M4_C"/>
    <property type="match status" value="1"/>
</dbReference>
<dbReference type="PRINTS" id="PR00730">
    <property type="entry name" value="THERMOLYSIN"/>
</dbReference>
<dbReference type="SUPFAM" id="SSF55486">
    <property type="entry name" value="Metalloproteases ('zincins'), catalytic domain"/>
    <property type="match status" value="1"/>
</dbReference>
<dbReference type="PROSITE" id="PS00142">
    <property type="entry name" value="ZINC_PROTEASE"/>
    <property type="match status" value="1"/>
</dbReference>
<organism>
    <name type="scientific">Pseudomonas aeruginosa (strain ATCC 15692 / DSM 22644 / CIP 104116 / JCM 14847 / LMG 12228 / 1C / PRS 101 / PAO1)</name>
    <dbReference type="NCBI Taxonomy" id="208964"/>
    <lineage>
        <taxon>Bacteria</taxon>
        <taxon>Pseudomonadati</taxon>
        <taxon>Pseudomonadota</taxon>
        <taxon>Gammaproteobacteria</taxon>
        <taxon>Pseudomonadales</taxon>
        <taxon>Pseudomonadaceae</taxon>
        <taxon>Pseudomonas</taxon>
    </lineage>
</organism>